<gene>
    <name type="primary">F</name>
</gene>
<accession>P19716</accession>
<comment type="function">
    <text evidence="1">Class I viral fusion protein. Under the current model, the protein has at least 3 conformational states: pre-fusion native state, pre-hairpin intermediate state, and post-fusion hairpin state. During viral and plasma cell membrane fusion, the heptad repeat (HR) regions assume a trimer-of-hairpins structure, positioning the fusion peptide in close proximity to the C-terminal region of the ectodomain. The formation of this structure appears to drive apposition and subsequent fusion of viral and plasma cell membranes. Directs fusion of viral and cellular membranes leading to delivery of the nucleocapsid into the cytoplasm. This fusion is pH independent and occurs directly at the outer cell membrane. The trimer of F1-F2 (F protein) probably interacts with HN at the virion surface. Upon HN binding to its cellular receptor, the hydrophobic fusion peptide is unmasked and interacts with the cellular membrane, inducing the fusion between cell and virion membranes. Later in infection, F proteins expressed at the plasma membrane of infected cells could mediate fusion with adjacent cells to form syncytia, a cytopathic effect that could lead to tissue necrosis (By similarity).</text>
</comment>
<comment type="subunit">
    <text evidence="2">Homotrimer; disulfide-linked F1-F2 (By similarity). Interacts with host LAMP1; LAMP2 and LAMP3; these interactions promote the cleavage of the viral fusion protein F (By similarity).</text>
</comment>
<comment type="subcellular location">
    <subcellularLocation>
        <location evidence="1">Virion membrane</location>
        <topology evidence="1">Single-pass type I membrane protein</topology>
    </subcellularLocation>
    <subcellularLocation>
        <location evidence="1">Host cell membrane</location>
        <topology evidence="1">Single-pass membrane protein</topology>
    </subcellularLocation>
</comment>
<comment type="domain">
    <text evidence="2">The 2 coiled coil regions form a stable six-helix bundle.</text>
</comment>
<comment type="PTM">
    <text evidence="3">The inactive precursor F0 is glycosylated and proteolytically cleaved into F1 and F2 to be functionally active. The cleavage is mediated by cellular proteases including host FURIN during the transport and maturation of the polypeptide.</text>
</comment>
<comment type="similarity">
    <text evidence="7">Belongs to the paramyxoviruses fusion glycoprotein family.</text>
</comment>
<name>FUS_MUMP1</name>
<feature type="signal peptide" evidence="4">
    <location>
        <begin position="1"/>
        <end position="19"/>
    </location>
</feature>
<feature type="chain" id="PRO_0000039285" description="Fusion glycoprotein F0">
    <location>
        <begin position="20"/>
        <end position="538"/>
    </location>
</feature>
<feature type="chain" id="PRO_0000039286" description="Fusion glycoprotein F2">
    <location>
        <begin position="20"/>
        <end position="102"/>
    </location>
</feature>
<feature type="chain" id="PRO_0000039287" description="Fusion glycoprotein F1">
    <location>
        <begin position="103"/>
        <end position="538"/>
    </location>
</feature>
<feature type="topological domain" description="Extracellular" evidence="1">
    <location>
        <begin position="20"/>
        <end position="486"/>
    </location>
</feature>
<feature type="transmembrane region" description="Helical" evidence="6">
    <location>
        <begin position="487"/>
        <end position="507"/>
    </location>
</feature>
<feature type="topological domain" description="Cytoplasmic" evidence="1">
    <location>
        <begin position="508"/>
        <end position="538"/>
    </location>
</feature>
<feature type="region of interest" description="Fusion peptide" evidence="4">
    <location>
        <begin position="103"/>
        <end position="127"/>
    </location>
</feature>
<feature type="coiled-coil region" evidence="6">
    <location>
        <begin position="128"/>
        <end position="156"/>
    </location>
</feature>
<feature type="coiled-coil region" evidence="6">
    <location>
        <begin position="452"/>
        <end position="477"/>
    </location>
</feature>
<feature type="site" description="Determinant for fusogenicity and cleavage efficiency" evidence="3">
    <location>
        <position position="95"/>
    </location>
</feature>
<feature type="site" description="Cleavage; by host" evidence="5">
    <location>
        <begin position="102"/>
        <end position="103"/>
    </location>
</feature>
<feature type="glycosylation site" description="N-linked (GlcNAc...) asparagine; by host" evidence="4">
    <location>
        <position position="56"/>
    </location>
</feature>
<feature type="glycosylation site" description="N-linked (GlcNAc...) asparagine; by host" evidence="6">
    <location>
        <position position="73"/>
    </location>
</feature>
<feature type="glycosylation site" description="N-linked (GlcNAc...) asparagine; by host" evidence="6">
    <location>
        <position position="89"/>
    </location>
</feature>
<feature type="glycosylation site" description="N-linked (GlcNAc...) asparagine; by host" evidence="6">
    <location>
        <position position="182"/>
    </location>
</feature>
<feature type="glycosylation site" description="N-linked (GlcNAc...) asparagine; by host" evidence="6">
    <location>
        <position position="352"/>
    </location>
</feature>
<feature type="glycosylation site" description="N-linked (GlcNAc...) asparagine; by host" evidence="6">
    <location>
        <position position="427"/>
    </location>
</feature>
<feature type="glycosylation site" description="N-linked (GlcNAc...) asparagine; by host" evidence="6">
    <location>
        <position position="433"/>
    </location>
</feature>
<feature type="glycosylation site" description="N-linked (GlcNAc...) asparagine; by host" evidence="6">
    <location>
        <position position="457"/>
    </location>
</feature>
<feature type="disulfide bond" description="Interchain (with C-195)" evidence="4">
    <location>
        <position position="64"/>
    </location>
</feature>
<feature type="disulfide bond" description="Interchain (with C-68)" evidence="4">
    <location>
        <position position="185"/>
    </location>
</feature>
<feature type="disulfide bond" evidence="4">
    <location>
        <begin position="324"/>
        <end position="333"/>
    </location>
</feature>
<feature type="disulfide bond" evidence="4">
    <location>
        <begin position="348"/>
        <end position="356"/>
    </location>
</feature>
<feature type="disulfide bond" evidence="4">
    <location>
        <begin position="380"/>
        <end position="385"/>
    </location>
</feature>
<feature type="disulfide bond" evidence="4">
    <location>
        <begin position="387"/>
        <end position="410"/>
    </location>
</feature>
<reference key="1">
    <citation type="journal article" date="1989" name="J. Gen. Virol.">
        <title>The mumps virus fusion protein mRNA sequence and homology among the paramyxoviridae proteins.</title>
        <authorList>
            <person name="Elango N."/>
            <person name="Varsanyi T.M."/>
            <person name="Koevamees J."/>
            <person name="Norrby E."/>
        </authorList>
    </citation>
    <scope>NUCLEOTIDE SEQUENCE [GENOMIC RNA]</scope>
</reference>
<reference key="2">
    <citation type="journal article" date="2022" name="Viruses">
        <title>Exploring the Mumps Virus Glycoproteins: A Review.</title>
        <authorList>
            <person name="Frost J.R."/>
            <person name="Shaikh S."/>
            <person name="Severini A."/>
        </authorList>
    </citation>
    <scope>REVIEW</scope>
</reference>
<protein>
    <recommendedName>
        <fullName>Fusion glycoprotein F0</fullName>
    </recommendedName>
    <component>
        <recommendedName>
            <fullName>Fusion glycoprotein F2</fullName>
        </recommendedName>
    </component>
    <component>
        <recommendedName>
            <fullName>Fusion glycoprotein F1</fullName>
        </recommendedName>
    </component>
</protein>
<proteinExistence type="inferred from homology"/>
<organismHost>
    <name type="scientific">Homo sapiens</name>
    <name type="common">Human</name>
    <dbReference type="NCBI Taxonomy" id="9606"/>
</organismHost>
<organism>
    <name type="scientific">Mumps virus (strain SBL-1)</name>
    <name type="common">MuV</name>
    <dbReference type="NCBI Taxonomy" id="11173"/>
    <lineage>
        <taxon>Viruses</taxon>
        <taxon>Riboviria</taxon>
        <taxon>Orthornavirae</taxon>
        <taxon>Negarnaviricota</taxon>
        <taxon>Haploviricotina</taxon>
        <taxon>Monjiviricetes</taxon>
        <taxon>Mononegavirales</taxon>
        <taxon>Paramyxoviridae</taxon>
        <taxon>Rubulavirinae</taxon>
        <taxon>Orthorubulavirus</taxon>
        <taxon>Orthorubulavirus parotitidis</taxon>
        <taxon>Mumps orthorubulavirus</taxon>
    </lineage>
</organism>
<evidence type="ECO:0000250" key="1"/>
<evidence type="ECO:0000250" key="2">
    <source>
        <dbReference type="UniProtKB" id="P11236"/>
    </source>
</evidence>
<evidence type="ECO:0000250" key="3">
    <source>
        <dbReference type="UniProtKB" id="Q5SC53"/>
    </source>
</evidence>
<evidence type="ECO:0000250" key="4">
    <source>
        <dbReference type="UniProtKB" id="Q786F3"/>
    </source>
</evidence>
<evidence type="ECO:0000250" key="5">
    <source>
        <dbReference type="UniProtKB" id="Q9JAE0"/>
    </source>
</evidence>
<evidence type="ECO:0000255" key="6"/>
<evidence type="ECO:0000305" key="7"/>
<keyword id="KW-0165">Cleavage on pair of basic residues</keyword>
<keyword id="KW-0175">Coiled coil</keyword>
<keyword id="KW-1015">Disulfide bond</keyword>
<keyword id="KW-1169">Fusion of virus membrane with host cell membrane</keyword>
<keyword id="KW-1168">Fusion of virus membrane with host membrane</keyword>
<keyword id="KW-0325">Glycoprotein</keyword>
<keyword id="KW-1032">Host cell membrane</keyword>
<keyword id="KW-1043">Host membrane</keyword>
<keyword id="KW-0472">Membrane</keyword>
<keyword id="KW-0732">Signal</keyword>
<keyword id="KW-0812">Transmembrane</keyword>
<keyword id="KW-1133">Transmembrane helix</keyword>
<keyword id="KW-0261">Viral envelope protein</keyword>
<keyword id="KW-1162">Viral penetration into host cytoplasm</keyword>
<keyword id="KW-0946">Virion</keyword>
<keyword id="KW-1160">Virus entry into host cell</keyword>
<sequence>MKAFPVICLGFAIFSSSICVNINILQQIGYIKQQVRQLSYYSQSSSSYVVVKLLPNIQPTDNSCEFKSVTQYNKTLSNLLLPIAENINNITSPSPGSRRHKRFAGIAIGIAALGVATAAQVTAAVSLVQAQTNARAIAAMKNSIQATNRAVFEVKEGTQQLAIAVQAIQDHINTIMNTQLNNMSCQILDNQLATSLGLYLTELTTVFQPQLINPALSPISIQALRSLLGSMTPAVVQATLSTSISAAEILSAGLMEGQIVSVLLDEMQMIVKINVPTIVTQSNALVIDFYSISSFINNQESIIQLPDRILEIGNEQWRYPAKNCKLTRHHIFCQYNEAERLSLETKLCLAGNISACVFSSIAGSYMRRFVALDGTIVANCRSLTCLCKSPSYPIYQPDHHAVTTIDLTSCQTLSLDGLDFSIVSLSNITYAENLTISLSQTINTQPIDISTELSKVNASLQNAVKYIKESNHQLQSVSVSSKIGAIIVAALVLSILSIIISLLFCFWAYIATKEIRRINFKTNHINTISSSVDDLIRY</sequence>
<dbReference type="EMBL" id="D00426">
    <property type="protein sequence ID" value="BAA00330.1"/>
    <property type="molecule type" value="Genomic_RNA"/>
</dbReference>
<dbReference type="PIR" id="A31329">
    <property type="entry name" value="VGNZMS"/>
</dbReference>
<dbReference type="SMR" id="P19716"/>
<dbReference type="GlyCosmos" id="P19716">
    <property type="glycosylation" value="7 sites, No reported glycans"/>
</dbReference>
<dbReference type="GO" id="GO:0020002">
    <property type="term" value="C:host cell plasma membrane"/>
    <property type="evidence" value="ECO:0007669"/>
    <property type="project" value="UniProtKB-SubCell"/>
</dbReference>
<dbReference type="GO" id="GO:0016020">
    <property type="term" value="C:membrane"/>
    <property type="evidence" value="ECO:0007669"/>
    <property type="project" value="UniProtKB-KW"/>
</dbReference>
<dbReference type="GO" id="GO:0019031">
    <property type="term" value="C:viral envelope"/>
    <property type="evidence" value="ECO:0007669"/>
    <property type="project" value="UniProtKB-KW"/>
</dbReference>
<dbReference type="GO" id="GO:0055036">
    <property type="term" value="C:virion membrane"/>
    <property type="evidence" value="ECO:0007669"/>
    <property type="project" value="UniProtKB-SubCell"/>
</dbReference>
<dbReference type="GO" id="GO:0019064">
    <property type="term" value="P:fusion of virus membrane with host plasma membrane"/>
    <property type="evidence" value="ECO:0007669"/>
    <property type="project" value="UniProtKB-KW"/>
</dbReference>
<dbReference type="GO" id="GO:0046718">
    <property type="term" value="P:symbiont entry into host cell"/>
    <property type="evidence" value="ECO:0007669"/>
    <property type="project" value="UniProtKB-KW"/>
</dbReference>
<dbReference type="Gene3D" id="1.10.287.2480">
    <property type="match status" value="1"/>
</dbReference>
<dbReference type="Gene3D" id="6.10.10.110">
    <property type="match status" value="1"/>
</dbReference>
<dbReference type="Gene3D" id="2.60.40.1690">
    <property type="entry name" value="Head and neck region of the ectodomain of NDV fusion glycoprotein"/>
    <property type="match status" value="1"/>
</dbReference>
<dbReference type="Gene3D" id="2.40.490.10">
    <property type="entry name" value="Newcastle disease virus like domain"/>
    <property type="match status" value="1"/>
</dbReference>
<dbReference type="Gene3D" id="1.10.287.770">
    <property type="entry name" value="YojJ-like"/>
    <property type="match status" value="1"/>
</dbReference>
<dbReference type="InterPro" id="IPR000776">
    <property type="entry name" value="Fusion_F0_Paramyxovir"/>
</dbReference>
<dbReference type="Pfam" id="PF00523">
    <property type="entry name" value="Fusion_gly"/>
    <property type="match status" value="1"/>
</dbReference>
<dbReference type="SUPFAM" id="SSF69922">
    <property type="entry name" value="Head and neck region of the ectodomain of NDV fusion glycoprotein"/>
    <property type="match status" value="1"/>
</dbReference>
<dbReference type="SUPFAM" id="SSF58069">
    <property type="entry name" value="Virus ectodomain"/>
    <property type="match status" value="1"/>
</dbReference>